<keyword id="KW-0067">ATP-binding</keyword>
<keyword id="KW-0238">DNA-binding</keyword>
<keyword id="KW-0413">Isomerase</keyword>
<keyword id="KW-0460">Magnesium</keyword>
<keyword id="KW-0479">Metal-binding</keyword>
<keyword id="KW-0547">Nucleotide-binding</keyword>
<keyword id="KW-1185">Reference proteome</keyword>
<keyword id="KW-0799">Topoisomerase</keyword>
<reference key="1">
    <citation type="journal article" date="1999" name="DNA Res.">
        <title>Complete genome sequence of an aerobic hyper-thermophilic crenarchaeon, Aeropyrum pernix K1.</title>
        <authorList>
            <person name="Kawarabayasi Y."/>
            <person name="Hino Y."/>
            <person name="Horikawa H."/>
            <person name="Yamazaki S."/>
            <person name="Haikawa Y."/>
            <person name="Jin-no K."/>
            <person name="Takahashi M."/>
            <person name="Sekine M."/>
            <person name="Baba S."/>
            <person name="Ankai A."/>
            <person name="Kosugi H."/>
            <person name="Hosoyama A."/>
            <person name="Fukui S."/>
            <person name="Nagai Y."/>
            <person name="Nishijima K."/>
            <person name="Nakazawa H."/>
            <person name="Takamiya M."/>
            <person name="Masuda S."/>
            <person name="Funahashi T."/>
            <person name="Tanaka T."/>
            <person name="Kudoh Y."/>
            <person name="Yamazaki J."/>
            <person name="Kushida N."/>
            <person name="Oguchi A."/>
            <person name="Aoki K."/>
            <person name="Kubota K."/>
            <person name="Nakamura Y."/>
            <person name="Nomura N."/>
            <person name="Sako Y."/>
            <person name="Kikuchi H."/>
        </authorList>
    </citation>
    <scope>NUCLEOTIDE SEQUENCE [LARGE SCALE GENOMIC DNA]</scope>
    <source>
        <strain>ATCC 700893 / DSM 11879 / JCM 9820 / NBRC 100138 / K1</strain>
    </source>
</reference>
<sequence>MSGEMFGDEVDIKARLRAAEVMYKKFHRLISDVIKGRPPKLEIPKRTLSNTIFDPERGILVIGEEKLEREFLNVGESRRFMQTLLMASIIYQSLIENEYPTIRDLYYKGKHTIVYRDYSGRKREENTWDEQKESDSVIQDIEVYTGLFREDMLILSKEKGKVVGNMRIRSGGDVIDLSKLGHGAYAIEPTPDLIEFLDVDAEFVLVVEKDAVFQQLHRAGFWKKYKALLVTGSGQPDRATRRFVRRLHEELKLPVYIITDSDPYGWYIYSVYKVGSITLSYESERLATPKAKFLGVQMTDIFGYRGKKPYLSEAERKKFMIKATDKDIKRAKELLNYSWIGKNRRWNVEIRLFLKHLVKLEIEAIASKGLKFFAYQYIPEKIETGDWID</sequence>
<name>TOP6A_AERPE</name>
<feature type="chain" id="PRO_0000145444" description="Type 2 DNA topoisomerase 6 subunit A">
    <location>
        <begin position="1"/>
        <end position="389"/>
    </location>
</feature>
<feature type="domain" description="Topo IIA-type catalytic" evidence="2">
    <location>
        <begin position="13"/>
        <end position="161"/>
    </location>
</feature>
<feature type="active site" description="O-(5'-phospho-DNA)-tyrosine intermediate" evidence="2">
    <location>
        <position position="107"/>
    </location>
</feature>
<feature type="binding site" evidence="1">
    <location>
        <position position="208"/>
    </location>
    <ligand>
        <name>Mg(2+)</name>
        <dbReference type="ChEBI" id="CHEBI:18420"/>
    </ligand>
</feature>
<feature type="binding site" evidence="1">
    <location>
        <position position="260"/>
    </location>
    <ligand>
        <name>Mg(2+)</name>
        <dbReference type="ChEBI" id="CHEBI:18420"/>
    </ligand>
</feature>
<proteinExistence type="inferred from homology"/>
<protein>
    <recommendedName>
        <fullName evidence="1">Type 2 DNA topoisomerase 6 subunit A</fullName>
        <ecNumber evidence="1">5.6.2.2</ecNumber>
    </recommendedName>
    <alternativeName>
        <fullName evidence="1">Type II DNA topoisomerase VI subunit A</fullName>
    </alternativeName>
</protein>
<gene>
    <name evidence="1" type="primary">top6A</name>
    <name type="ordered locus">APE_0703.1</name>
</gene>
<dbReference type="EC" id="5.6.2.2" evidence="1"/>
<dbReference type="EMBL" id="BA000002">
    <property type="protein sequence ID" value="BAA79679.2"/>
    <property type="molecule type" value="Genomic_DNA"/>
</dbReference>
<dbReference type="PIR" id="G72659">
    <property type="entry name" value="G72659"/>
</dbReference>
<dbReference type="RefSeq" id="WP_010865915.1">
    <property type="nucleotide sequence ID" value="NC_000854.2"/>
</dbReference>
<dbReference type="SMR" id="Q9YE67"/>
<dbReference type="STRING" id="272557.APE_0703.1"/>
<dbReference type="EnsemblBacteria" id="BAA79679">
    <property type="protein sequence ID" value="BAA79679"/>
    <property type="gene ID" value="APE_0703.1"/>
</dbReference>
<dbReference type="GeneID" id="1444835"/>
<dbReference type="KEGG" id="ape:APE_0703.1"/>
<dbReference type="PATRIC" id="fig|272557.25.peg.504"/>
<dbReference type="eggNOG" id="arCOG04143">
    <property type="taxonomic scope" value="Archaea"/>
</dbReference>
<dbReference type="Proteomes" id="UP000002518">
    <property type="component" value="Chromosome"/>
</dbReference>
<dbReference type="GO" id="GO:0005694">
    <property type="term" value="C:chromosome"/>
    <property type="evidence" value="ECO:0007669"/>
    <property type="project" value="InterPro"/>
</dbReference>
<dbReference type="GO" id="GO:0005524">
    <property type="term" value="F:ATP binding"/>
    <property type="evidence" value="ECO:0007669"/>
    <property type="project" value="UniProtKB-KW"/>
</dbReference>
<dbReference type="GO" id="GO:0003677">
    <property type="term" value="F:DNA binding"/>
    <property type="evidence" value="ECO:0007669"/>
    <property type="project" value="UniProtKB-UniRule"/>
</dbReference>
<dbReference type="GO" id="GO:0003918">
    <property type="term" value="F:DNA topoisomerase type II (double strand cut, ATP-hydrolyzing) activity"/>
    <property type="evidence" value="ECO:0007669"/>
    <property type="project" value="UniProtKB-UniRule"/>
</dbReference>
<dbReference type="GO" id="GO:0000287">
    <property type="term" value="F:magnesium ion binding"/>
    <property type="evidence" value="ECO:0007669"/>
    <property type="project" value="UniProtKB-UniRule"/>
</dbReference>
<dbReference type="GO" id="GO:0006265">
    <property type="term" value="P:DNA topological change"/>
    <property type="evidence" value="ECO:0007669"/>
    <property type="project" value="UniProtKB-UniRule"/>
</dbReference>
<dbReference type="CDD" id="cd00223">
    <property type="entry name" value="TOPRIM_TopoIIB_SPO"/>
    <property type="match status" value="1"/>
</dbReference>
<dbReference type="FunFam" id="3.40.1360.10:FF:000011">
    <property type="entry name" value="Type 2 DNA topoisomerase 6 subunit A"/>
    <property type="match status" value="1"/>
</dbReference>
<dbReference type="Gene3D" id="3.40.1360.10">
    <property type="match status" value="1"/>
</dbReference>
<dbReference type="Gene3D" id="1.10.10.10">
    <property type="entry name" value="Winged helix-like DNA-binding domain superfamily/Winged helix DNA-binding domain"/>
    <property type="match status" value="1"/>
</dbReference>
<dbReference type="HAMAP" id="MF_00132">
    <property type="entry name" value="Top6A"/>
    <property type="match status" value="1"/>
</dbReference>
<dbReference type="InterPro" id="IPR002815">
    <property type="entry name" value="Spo11/TopoVI_A"/>
</dbReference>
<dbReference type="InterPro" id="IPR013049">
    <property type="entry name" value="Spo11/TopoVI_A_N"/>
</dbReference>
<dbReference type="InterPro" id="IPR036078">
    <property type="entry name" value="Spo11/TopoVI_A_sf"/>
</dbReference>
<dbReference type="InterPro" id="IPR049333">
    <property type="entry name" value="Topo_VI_alpha"/>
</dbReference>
<dbReference type="InterPro" id="IPR004085">
    <property type="entry name" value="TopoVI_A"/>
</dbReference>
<dbReference type="InterPro" id="IPR034136">
    <property type="entry name" value="TOPRIM_Topo6A/Spo11"/>
</dbReference>
<dbReference type="InterPro" id="IPR036388">
    <property type="entry name" value="WH-like_DNA-bd_sf"/>
</dbReference>
<dbReference type="NCBIfam" id="NF003336">
    <property type="entry name" value="PRK04342.1-5"/>
    <property type="match status" value="1"/>
</dbReference>
<dbReference type="PANTHER" id="PTHR10848">
    <property type="entry name" value="MEIOTIC RECOMBINATION PROTEIN SPO11"/>
    <property type="match status" value="1"/>
</dbReference>
<dbReference type="PANTHER" id="PTHR10848:SF0">
    <property type="entry name" value="MEIOTIC RECOMBINATION PROTEIN SPO11"/>
    <property type="match status" value="1"/>
</dbReference>
<dbReference type="Pfam" id="PF21180">
    <property type="entry name" value="TOP6A-Spo11_Toprim"/>
    <property type="match status" value="1"/>
</dbReference>
<dbReference type="Pfam" id="PF20768">
    <property type="entry name" value="Topo_VI_alpha"/>
    <property type="match status" value="1"/>
</dbReference>
<dbReference type="Pfam" id="PF04406">
    <property type="entry name" value="TP6A_N"/>
    <property type="match status" value="1"/>
</dbReference>
<dbReference type="PRINTS" id="PR01550">
    <property type="entry name" value="TOP6AFAMILY"/>
</dbReference>
<dbReference type="PRINTS" id="PR01552">
    <property type="entry name" value="TPISMRASE6A"/>
</dbReference>
<dbReference type="SUPFAM" id="SSF56726">
    <property type="entry name" value="DNA topoisomerase IV, alpha subunit"/>
    <property type="match status" value="1"/>
</dbReference>
<dbReference type="PROSITE" id="PS52041">
    <property type="entry name" value="TOPO_IIB"/>
    <property type="match status" value="1"/>
</dbReference>
<accession>Q9YE67</accession>
<evidence type="ECO:0000255" key="1">
    <source>
        <dbReference type="HAMAP-Rule" id="MF_00132"/>
    </source>
</evidence>
<evidence type="ECO:0000255" key="2">
    <source>
        <dbReference type="PROSITE-ProRule" id="PRU01385"/>
    </source>
</evidence>
<comment type="function">
    <text evidence="1">Relaxes both positive and negative superturns and exhibits a strong decatenase activity.</text>
</comment>
<comment type="catalytic activity">
    <reaction evidence="1">
        <text>ATP-dependent breakage, passage and rejoining of double-stranded DNA.</text>
        <dbReference type="EC" id="5.6.2.2"/>
    </reaction>
</comment>
<comment type="cofactor">
    <cofactor evidence="1">
        <name>Mg(2+)</name>
        <dbReference type="ChEBI" id="CHEBI:18420"/>
    </cofactor>
</comment>
<comment type="subunit">
    <text evidence="1">Homodimer. Heterotetramer of two Top6A and two Top6B chains.</text>
</comment>
<comment type="similarity">
    <text evidence="1">Belongs to the TOP6A family.</text>
</comment>
<organism>
    <name type="scientific">Aeropyrum pernix (strain ATCC 700893 / DSM 11879 / JCM 9820 / NBRC 100138 / K1)</name>
    <dbReference type="NCBI Taxonomy" id="272557"/>
    <lineage>
        <taxon>Archaea</taxon>
        <taxon>Thermoproteota</taxon>
        <taxon>Thermoprotei</taxon>
        <taxon>Desulfurococcales</taxon>
        <taxon>Desulfurococcaceae</taxon>
        <taxon>Aeropyrum</taxon>
    </lineage>
</organism>